<evidence type="ECO:0000250" key="1"/>
<evidence type="ECO:0000255" key="2"/>
<evidence type="ECO:0000255" key="3">
    <source>
        <dbReference type="PROSITE-ProRule" id="PRU00316"/>
    </source>
</evidence>
<evidence type="ECO:0000269" key="4">
    <source>
    </source>
</evidence>
<evidence type="ECO:0000303" key="5">
    <source>
    </source>
</evidence>
<evidence type="ECO:0000303" key="6">
    <source ref="2"/>
</evidence>
<evidence type="ECO:0000305" key="7"/>
<gene>
    <name type="primary">IFNLR1</name>
    <name type="synonym">IL28RA</name>
</gene>
<reference key="1">
    <citation type="journal article" date="2014" name="J. Virol.">
        <title>Antiviral activity of lambda interferon in chickens.</title>
        <authorList>
            <person name="Reuter A."/>
            <person name="Soubies S."/>
            <person name="Hartle S."/>
            <person name="Schusser B."/>
            <person name="Kaspers B."/>
            <person name="Staeheli P."/>
            <person name="Rubbenstroth D."/>
        </authorList>
    </citation>
    <scope>NUCLEOTIDE SEQUENCE [MRNA] (ISOFORMS 1 AND 2)</scope>
    <scope>FUNCTION</scope>
    <source>
        <tissue>Lung</tissue>
    </source>
</reference>
<reference key="2">
    <citation type="submission" date="2009-04" db="EMBL/GenBank/DDBJ databases">
        <authorList>
            <person name="Goossens K.E."/>
            <person name="Bean A.G."/>
            <person name="Lowenthal J.W."/>
        </authorList>
    </citation>
    <scope>NUCLEOTIDE SEQUENCE [MRNA] (ISOFORMS 1 AND 2)</scope>
</reference>
<reference key="3">
    <citation type="journal article" date="2004" name="Nature">
        <title>Sequence and comparative analysis of the chicken genome provide unique perspectives on vertebrate evolution.</title>
        <authorList>
            <person name="Hillier L.W."/>
            <person name="Miller W."/>
            <person name="Birney E."/>
            <person name="Warren W."/>
            <person name="Hardison R.C."/>
            <person name="Ponting C.P."/>
            <person name="Bork P."/>
            <person name="Burt D.W."/>
            <person name="Groenen M.A.M."/>
            <person name="Delany M.E."/>
            <person name="Dodgson J.B."/>
            <person name="Chinwalla A.T."/>
            <person name="Cliften P.F."/>
            <person name="Clifton S.W."/>
            <person name="Delehaunty K.D."/>
            <person name="Fronick C."/>
            <person name="Fulton R.S."/>
            <person name="Graves T.A."/>
            <person name="Kremitzki C."/>
            <person name="Layman D."/>
            <person name="Magrini V."/>
            <person name="McPherson J.D."/>
            <person name="Miner T.L."/>
            <person name="Minx P."/>
            <person name="Nash W.E."/>
            <person name="Nhan M.N."/>
            <person name="Nelson J.O."/>
            <person name="Oddy L.G."/>
            <person name="Pohl C.S."/>
            <person name="Randall-Maher J."/>
            <person name="Smith S.M."/>
            <person name="Wallis J.W."/>
            <person name="Yang S.-P."/>
            <person name="Romanov M.N."/>
            <person name="Rondelli C.M."/>
            <person name="Paton B."/>
            <person name="Smith J."/>
            <person name="Morrice D."/>
            <person name="Daniels L."/>
            <person name="Tempest H.G."/>
            <person name="Robertson L."/>
            <person name="Masabanda J.S."/>
            <person name="Griffin D.K."/>
            <person name="Vignal A."/>
            <person name="Fillon V."/>
            <person name="Jacobbson L."/>
            <person name="Kerje S."/>
            <person name="Andersson L."/>
            <person name="Crooijmans R.P."/>
            <person name="Aerts J."/>
            <person name="van der Poel J.J."/>
            <person name="Ellegren H."/>
            <person name="Caldwell R.B."/>
            <person name="Hubbard S.J."/>
            <person name="Grafham D.V."/>
            <person name="Kierzek A.M."/>
            <person name="McLaren S.R."/>
            <person name="Overton I.M."/>
            <person name="Arakawa H."/>
            <person name="Beattie K.J."/>
            <person name="Bezzubov Y."/>
            <person name="Boardman P.E."/>
            <person name="Bonfield J.K."/>
            <person name="Croning M.D.R."/>
            <person name="Davies R.M."/>
            <person name="Francis M.D."/>
            <person name="Humphray S.J."/>
            <person name="Scott C.E."/>
            <person name="Taylor R.G."/>
            <person name="Tickle C."/>
            <person name="Brown W.R.A."/>
            <person name="Rogers J."/>
            <person name="Buerstedde J.-M."/>
            <person name="Wilson S.A."/>
            <person name="Stubbs L."/>
            <person name="Ovcharenko I."/>
            <person name="Gordon L."/>
            <person name="Lucas S."/>
            <person name="Miller M.M."/>
            <person name="Inoko H."/>
            <person name="Shiina T."/>
            <person name="Kaufman J."/>
            <person name="Salomonsen J."/>
            <person name="Skjoedt K."/>
            <person name="Wong G.K.-S."/>
            <person name="Wang J."/>
            <person name="Liu B."/>
            <person name="Wang J."/>
            <person name="Yu J."/>
            <person name="Yang H."/>
            <person name="Nefedov M."/>
            <person name="Koriabine M."/>
            <person name="Dejong P.J."/>
            <person name="Goodstadt L."/>
            <person name="Webber C."/>
            <person name="Dickens N.J."/>
            <person name="Letunic I."/>
            <person name="Suyama M."/>
            <person name="Torrents D."/>
            <person name="von Mering C."/>
            <person name="Zdobnov E.M."/>
            <person name="Makova K."/>
            <person name="Nekrutenko A."/>
            <person name="Elnitski L."/>
            <person name="Eswara P."/>
            <person name="King D.C."/>
            <person name="Yang S.-P."/>
            <person name="Tyekucheva S."/>
            <person name="Radakrishnan A."/>
            <person name="Harris R.S."/>
            <person name="Chiaromonte F."/>
            <person name="Taylor J."/>
            <person name="He J."/>
            <person name="Rijnkels M."/>
            <person name="Griffiths-Jones S."/>
            <person name="Ureta-Vidal A."/>
            <person name="Hoffman M.M."/>
            <person name="Severin J."/>
            <person name="Searle S.M.J."/>
            <person name="Law A.S."/>
            <person name="Speed D."/>
            <person name="Waddington D."/>
            <person name="Cheng Z."/>
            <person name="Tuzun E."/>
            <person name="Eichler E."/>
            <person name="Bao Z."/>
            <person name="Flicek P."/>
            <person name="Shteynberg D.D."/>
            <person name="Brent M.R."/>
            <person name="Bye J.M."/>
            <person name="Huckle E.J."/>
            <person name="Chatterji S."/>
            <person name="Dewey C."/>
            <person name="Pachter L."/>
            <person name="Kouranov A."/>
            <person name="Mourelatos Z."/>
            <person name="Hatzigeorgiou A.G."/>
            <person name="Paterson A.H."/>
            <person name="Ivarie R."/>
            <person name="Brandstrom M."/>
            <person name="Axelsson E."/>
            <person name="Backstrom N."/>
            <person name="Berlin S."/>
            <person name="Webster M.T."/>
            <person name="Pourquie O."/>
            <person name="Reymond A."/>
            <person name="Ucla C."/>
            <person name="Antonarakis S.E."/>
            <person name="Long M."/>
            <person name="Emerson J.J."/>
            <person name="Betran E."/>
            <person name="Dupanloup I."/>
            <person name="Kaessmann H."/>
            <person name="Hinrichs A.S."/>
            <person name="Bejerano G."/>
            <person name="Furey T.S."/>
            <person name="Harte R.A."/>
            <person name="Raney B."/>
            <person name="Siepel A."/>
            <person name="Kent W.J."/>
            <person name="Haussler D."/>
            <person name="Eyras E."/>
            <person name="Castelo R."/>
            <person name="Abril J.F."/>
            <person name="Castellano S."/>
            <person name="Camara F."/>
            <person name="Parra G."/>
            <person name="Guigo R."/>
            <person name="Bourque G."/>
            <person name="Tesler G."/>
            <person name="Pevzner P.A."/>
            <person name="Smit A."/>
            <person name="Fulton L.A."/>
            <person name="Mardis E.R."/>
            <person name="Wilson R.K."/>
        </authorList>
    </citation>
    <scope>NUCLEOTIDE SEQUENCE [LARGE SCALE GENOMIC DNA]</scope>
    <source>
        <strain>Red jungle fowl</strain>
    </source>
</reference>
<feature type="signal peptide" evidence="2">
    <location>
        <begin position="1"/>
        <end position="22"/>
    </location>
</feature>
<feature type="chain" id="PRO_0000429981" description="Interferon lambda receptor 1">
    <location>
        <begin position="23"/>
        <end position="567"/>
    </location>
</feature>
<feature type="topological domain" description="Extracellular" evidence="2">
    <location>
        <begin position="23"/>
        <end position="229"/>
    </location>
</feature>
<feature type="transmembrane region" description="Helical" evidence="2">
    <location>
        <begin position="230"/>
        <end position="250"/>
    </location>
</feature>
<feature type="topological domain" description="Cytoplasmic" evidence="2">
    <location>
        <begin position="251"/>
        <end position="567"/>
    </location>
</feature>
<feature type="domain" description="Fibronectin type-III" evidence="3">
    <location>
        <begin position="26"/>
        <end position="121"/>
    </location>
</feature>
<feature type="glycosylation site" description="N-linked (GlcNAc...) asparagine" evidence="2">
    <location>
        <position position="29"/>
    </location>
</feature>
<feature type="glycosylation site" description="N-linked (GlcNAc...) asparagine" evidence="2">
    <location>
        <position position="141"/>
    </location>
</feature>
<feature type="disulfide bond" evidence="1">
    <location>
        <begin position="74"/>
        <end position="82"/>
    </location>
</feature>
<feature type="disulfide bond" evidence="1">
    <location>
        <begin position="86"/>
        <end position="149"/>
    </location>
</feature>
<feature type="disulfide bond" evidence="1">
    <location>
        <begin position="193"/>
        <end position="215"/>
    </location>
</feature>
<feature type="splice variant" id="VSP_055397" description="In isoform 2." evidence="5 6">
    <original>EWKFPFSATIPVFVLLILLTSASI</original>
    <variation>MTFLRKDVLRYQMRLQNIKEFHQN</variation>
    <location>
        <begin position="223"/>
        <end position="246"/>
    </location>
</feature>
<feature type="splice variant" id="VSP_055398" description="In isoform 2." evidence="5 6">
    <location>
        <begin position="247"/>
        <end position="567"/>
    </location>
</feature>
<feature type="sequence conflict" description="In Ref. 1; AHF20242." evidence="7" ref="1">
    <original>L</original>
    <variation>P</variation>
    <location>
        <position position="124"/>
    </location>
</feature>
<accession>K9JA28</accession>
<accession>K9J9W8</accession>
<accession>W0FB28</accession>
<comment type="function">
    <text evidence="4">The IFNLR1/IL10RB dimer is a receptor for the cytokine ligands IFNL2 and IFNL3 and mediates their antiviral activity. The ligand/receptor complex stimulate the activation of the JAK/STAT signaling pathway leading to the expression of IFN-stimulated genes (ISG), which contribute to the antiviral state. Determines the cell type specificity of the lambda interferon action. Shows a more restricted pattern of expression in the epithelial tissues thereby limiting responses to lambda interferons primarily to epithelial cells of the respiratory, gastrointestinal, and reproductive tracts.</text>
</comment>
<comment type="subunit">
    <text evidence="1">Heterodimer with IL10RB.</text>
</comment>
<comment type="subcellular location">
    <subcellularLocation>
        <location evidence="1">Membrane</location>
        <topology evidence="1">Single-pass type I membrane protein</topology>
    </subcellularLocation>
</comment>
<comment type="alternative products">
    <event type="alternative splicing"/>
    <isoform>
        <id>K9JA28-1</id>
        <name>1</name>
        <sequence type="displayed"/>
    </isoform>
    <isoform>
        <id>K9JA28-2</id>
        <name>2</name>
        <sequence type="described" ref="VSP_055397 VSP_055398"/>
    </isoform>
</comment>
<comment type="similarity">
    <text evidence="7">Belongs to the type II cytokine receptor family.</text>
</comment>
<proteinExistence type="evidence at transcript level"/>
<name>INLR1_CHICK</name>
<sequence length="567" mass="64663">MSAWRIRVLATLCFLWQPRVHGQLPPPQNVTLLSKDFDMILTWTPGEGSPPDVLYTVRYESKTRMDKWIKVPHCRNIHSVSCNLTCVIPNFFIKFRAQVKATSGRFHSPWVKSQFKEYHLDVELAPPLLNVNVKENVIHVNATFPMAICVESLPWMYDFNLWEAGSEDKKQYKSIFRKKAVTIDTTALRGNYCFNARSSIQSIDFKHSKFSQPVCMQLNYEGEWKFPFSATIPVFVLLILLTSASIIWLLKQDAKHKKMPQTLDLSNCKIAGPTFCCELRENEFLTDCLICTDKPMSQGKKNKTLAQNNQMWMASFLPSSSSEEEEEEEEEDSSSFIPYTEMLQFPRKHFNFQTPRTADAETILDSTSGVLSVVGGSTLDLSALGFSFFPIRKNEMDTSGSQGNEKASHSHSSSLGRISLTDVRFPGPREHGQHGTDSNDCLEVSLLHTLMNSSCTRLPADEHCLYKKDHDFTICYQKPTLDQPVQVSENPLLNEDPSMEKFIYLQTLQVAEDEGFASDCDSGNFTEGTPPASTVLSDELRISDMEKRYDKKFKFKGYQHSHYMRRS</sequence>
<keyword id="KW-0025">Alternative splicing</keyword>
<keyword id="KW-0051">Antiviral defense</keyword>
<keyword id="KW-1015">Disulfide bond</keyword>
<keyword id="KW-0325">Glycoprotein</keyword>
<keyword id="KW-0472">Membrane</keyword>
<keyword id="KW-0675">Receptor</keyword>
<keyword id="KW-1185">Reference proteome</keyword>
<keyword id="KW-0732">Signal</keyword>
<keyword id="KW-0812">Transmembrane</keyword>
<keyword id="KW-1133">Transmembrane helix</keyword>
<dbReference type="EMBL" id="KF680104">
    <property type="protein sequence ID" value="AHF20241.1"/>
    <property type="molecule type" value="mRNA"/>
</dbReference>
<dbReference type="EMBL" id="KF680105">
    <property type="protein sequence ID" value="AHF20242.1"/>
    <property type="molecule type" value="mRNA"/>
</dbReference>
<dbReference type="EMBL" id="FJ947118">
    <property type="protein sequence ID" value="ADB82986.1"/>
    <property type="molecule type" value="mRNA"/>
</dbReference>
<dbReference type="EMBL" id="FJ947119">
    <property type="protein sequence ID" value="ADB82987.1"/>
    <property type="molecule type" value="mRNA"/>
</dbReference>
<dbReference type="EMBL" id="JH374927">
    <property type="status" value="NOT_ANNOTATED_CDS"/>
    <property type="molecule type" value="Genomic_DNA"/>
</dbReference>
<dbReference type="RefSeq" id="NP_001376470.1">
    <molecule id="K9JA28-1"/>
    <property type="nucleotide sequence ID" value="NM_001389541.2"/>
</dbReference>
<dbReference type="RefSeq" id="XP_040507653.1">
    <molecule id="K9JA28-1"/>
    <property type="nucleotide sequence ID" value="XM_040651719.2"/>
</dbReference>
<dbReference type="RefSeq" id="XP_046787949.1">
    <molecule id="K9JA28-1"/>
    <property type="nucleotide sequence ID" value="XM_046931993.1"/>
</dbReference>
<dbReference type="SMR" id="K9JA28"/>
<dbReference type="STRING" id="9031.ENSGALP00000068923"/>
<dbReference type="GlyCosmos" id="K9JA28">
    <property type="glycosylation" value="2 sites, No reported glycans"/>
</dbReference>
<dbReference type="GlyGen" id="K9JA28">
    <property type="glycosylation" value="2 sites"/>
</dbReference>
<dbReference type="PaxDb" id="9031-ENSGALP00000039657"/>
<dbReference type="Ensembl" id="ENSGALT00000040455">
    <molecule id="K9JA28-1"/>
    <property type="protein sequence ID" value="ENSGALP00000039657"/>
    <property type="gene ID" value="ENSGALG00000004231"/>
</dbReference>
<dbReference type="Ensembl" id="ENSGALT00010038061.1">
    <molecule id="K9JA28-1"/>
    <property type="protein sequence ID" value="ENSGALP00010021962.1"/>
    <property type="gene ID" value="ENSGALG00010015807.1"/>
</dbReference>
<dbReference type="Ensembl" id="ENSGALT00010038139.1">
    <molecule id="K9JA28-1"/>
    <property type="protein sequence ID" value="ENSGALP00010022010.1"/>
    <property type="gene ID" value="ENSGALG00010015838.1"/>
</dbReference>
<dbReference type="GeneID" id="419694"/>
<dbReference type="VEuPathDB" id="HostDB:geneid_419694"/>
<dbReference type="VEuPathDB" id="HostDB:LOC121107463"/>
<dbReference type="eggNOG" id="ENOG502S4B0">
    <property type="taxonomic scope" value="Eukaryota"/>
</dbReference>
<dbReference type="GeneTree" id="ENSGT00510000048978"/>
<dbReference type="InParanoid" id="K9JA28"/>
<dbReference type="OMA" id="EHTHYMG"/>
<dbReference type="OrthoDB" id="10031784at2759"/>
<dbReference type="Reactome" id="R-GGA-449836">
    <property type="pathway name" value="Other interleukin signaling"/>
</dbReference>
<dbReference type="Reactome" id="R-GGA-8854691">
    <property type="pathway name" value="Interleukin-20 family signaling"/>
</dbReference>
<dbReference type="PRO" id="PR:K9JA28"/>
<dbReference type="Proteomes" id="UP000000539">
    <property type="component" value="Chromosome 23"/>
</dbReference>
<dbReference type="Bgee" id="ENSGALG00000004231">
    <property type="expression patterns" value="Expressed in colon and 11 other cell types or tissues"/>
</dbReference>
<dbReference type="GO" id="GO:0005886">
    <property type="term" value="C:plasma membrane"/>
    <property type="evidence" value="ECO:0000318"/>
    <property type="project" value="GO_Central"/>
</dbReference>
<dbReference type="GO" id="GO:0004896">
    <property type="term" value="F:cytokine receptor activity"/>
    <property type="evidence" value="ECO:0000318"/>
    <property type="project" value="GO_Central"/>
</dbReference>
<dbReference type="GO" id="GO:0019221">
    <property type="term" value="P:cytokine-mediated signaling pathway"/>
    <property type="evidence" value="ECO:0000318"/>
    <property type="project" value="GO_Central"/>
</dbReference>
<dbReference type="GO" id="GO:0051607">
    <property type="term" value="P:defense response to virus"/>
    <property type="evidence" value="ECO:0000314"/>
    <property type="project" value="UniProtKB"/>
</dbReference>
<dbReference type="GO" id="GO:0034342">
    <property type="term" value="P:response to type III interferon"/>
    <property type="evidence" value="ECO:0000314"/>
    <property type="project" value="UniProtKB"/>
</dbReference>
<dbReference type="Gene3D" id="2.60.40.10">
    <property type="entry name" value="Immunoglobulins"/>
    <property type="match status" value="2"/>
</dbReference>
<dbReference type="InterPro" id="IPR003961">
    <property type="entry name" value="FN3_dom"/>
</dbReference>
<dbReference type="InterPro" id="IPR036116">
    <property type="entry name" value="FN3_sf"/>
</dbReference>
<dbReference type="InterPro" id="IPR013783">
    <property type="entry name" value="Ig-like_fold"/>
</dbReference>
<dbReference type="InterPro" id="IPR015373">
    <property type="entry name" value="Interferon/interleukin_rcp_dom"/>
</dbReference>
<dbReference type="InterPro" id="IPR050650">
    <property type="entry name" value="Type-II_Cytokine-TF_Rcpt"/>
</dbReference>
<dbReference type="PANTHER" id="PTHR20859:SF55">
    <property type="entry name" value="INTERFERON LAMBDA RECEPTOR 1"/>
    <property type="match status" value="1"/>
</dbReference>
<dbReference type="PANTHER" id="PTHR20859">
    <property type="entry name" value="INTERFERON/INTERLEUKIN RECEPTOR"/>
    <property type="match status" value="1"/>
</dbReference>
<dbReference type="Pfam" id="PF09294">
    <property type="entry name" value="Interfer-bind"/>
    <property type="match status" value="1"/>
</dbReference>
<dbReference type="Pfam" id="PF01108">
    <property type="entry name" value="Tissue_fac"/>
    <property type="match status" value="1"/>
</dbReference>
<dbReference type="SUPFAM" id="SSF49265">
    <property type="entry name" value="Fibronectin type III"/>
    <property type="match status" value="2"/>
</dbReference>
<dbReference type="PROSITE" id="PS50853">
    <property type="entry name" value="FN3"/>
    <property type="match status" value="1"/>
</dbReference>
<protein>
    <recommendedName>
        <fullName>Interferon lambda receptor 1</fullName>
        <shortName>IFN-lambda R1</shortName>
    </recommendedName>
    <alternativeName>
        <fullName>Cytokine receptor class-II member 12</fullName>
    </alternativeName>
    <alternativeName>
        <fullName>Cytokine receptor family 2 member 12</fullName>
        <shortName>CRF2-12</shortName>
    </alternativeName>
    <alternativeName>
        <fullName>Interleukin-28 receptor subunit alpha</fullName>
        <shortName>IL-28 receptor subunit alpha</shortName>
        <shortName>IL-28R-alpha</shortName>
        <shortName>IL-28RA</shortName>
    </alternativeName>
</protein>
<organism>
    <name type="scientific">Gallus gallus</name>
    <name type="common">Chicken</name>
    <dbReference type="NCBI Taxonomy" id="9031"/>
    <lineage>
        <taxon>Eukaryota</taxon>
        <taxon>Metazoa</taxon>
        <taxon>Chordata</taxon>
        <taxon>Craniata</taxon>
        <taxon>Vertebrata</taxon>
        <taxon>Euteleostomi</taxon>
        <taxon>Archelosauria</taxon>
        <taxon>Archosauria</taxon>
        <taxon>Dinosauria</taxon>
        <taxon>Saurischia</taxon>
        <taxon>Theropoda</taxon>
        <taxon>Coelurosauria</taxon>
        <taxon>Aves</taxon>
        <taxon>Neognathae</taxon>
        <taxon>Galloanserae</taxon>
        <taxon>Galliformes</taxon>
        <taxon>Phasianidae</taxon>
        <taxon>Phasianinae</taxon>
        <taxon>Gallus</taxon>
    </lineage>
</organism>